<accession>B2VZQ8</accession>
<organism>
    <name type="scientific">Pyrenophora tritici-repentis (strain Pt-1C-BFP)</name>
    <name type="common">Wheat tan spot fungus</name>
    <name type="synonym">Drechslera tritici-repentis</name>
    <dbReference type="NCBI Taxonomy" id="426418"/>
    <lineage>
        <taxon>Eukaryota</taxon>
        <taxon>Fungi</taxon>
        <taxon>Dikarya</taxon>
        <taxon>Ascomycota</taxon>
        <taxon>Pezizomycotina</taxon>
        <taxon>Dothideomycetes</taxon>
        <taxon>Pleosporomycetidae</taxon>
        <taxon>Pleosporales</taxon>
        <taxon>Pleosporineae</taxon>
        <taxon>Pleosporaceae</taxon>
        <taxon>Pyrenophora</taxon>
    </lineage>
</organism>
<protein>
    <recommendedName>
        <fullName evidence="1">Methylthioribose-1-phosphate isomerase</fullName>
        <shortName evidence="1">M1Pi</shortName>
        <shortName evidence="1">MTR-1-P isomerase</shortName>
        <ecNumber evidence="1">5.3.1.23</ecNumber>
    </recommendedName>
    <alternativeName>
        <fullName evidence="1">S-methyl-5-thioribose-1-phosphate isomerase</fullName>
    </alternativeName>
    <alternativeName>
        <fullName evidence="1">Translation initiation factor eIF-2B subunit alpha/beta/delta-like protein</fullName>
    </alternativeName>
</protein>
<evidence type="ECO:0000255" key="1">
    <source>
        <dbReference type="HAMAP-Rule" id="MF_03119"/>
    </source>
</evidence>
<reference key="1">
    <citation type="journal article" date="2013" name="G3 (Bethesda)">
        <title>Comparative genomics of a plant-pathogenic fungus, Pyrenophora tritici-repentis, reveals transduplication and the impact of repeat elements on pathogenicity and population divergence.</title>
        <authorList>
            <person name="Manning V.A."/>
            <person name="Pandelova I."/>
            <person name="Dhillon B."/>
            <person name="Wilhelm L.J."/>
            <person name="Goodwin S.B."/>
            <person name="Berlin A.M."/>
            <person name="Figueroa M."/>
            <person name="Freitag M."/>
            <person name="Hane J.K."/>
            <person name="Henrissat B."/>
            <person name="Holman W.H."/>
            <person name="Kodira C.D."/>
            <person name="Martin J."/>
            <person name="Oliver R.P."/>
            <person name="Robbertse B."/>
            <person name="Schackwitz W."/>
            <person name="Schwartz D.C."/>
            <person name="Spatafora J.W."/>
            <person name="Turgeon B.G."/>
            <person name="Yandava C."/>
            <person name="Young S."/>
            <person name="Zhou S."/>
            <person name="Zeng Q."/>
            <person name="Grigoriev I.V."/>
            <person name="Ma L.-J."/>
            <person name="Ciuffetti L.M."/>
        </authorList>
    </citation>
    <scope>NUCLEOTIDE SEQUENCE [LARGE SCALE GENOMIC DNA]</scope>
    <source>
        <strain>Pt-1C-BFP</strain>
    </source>
</reference>
<comment type="function">
    <text evidence="1">Catalyzes the interconversion of methylthioribose-1-phosphate (MTR-1-P) into methylthioribulose-1-phosphate (MTRu-1-P).</text>
</comment>
<comment type="catalytic activity">
    <reaction evidence="1">
        <text>5-(methylsulfanyl)-alpha-D-ribose 1-phosphate = 5-(methylsulfanyl)-D-ribulose 1-phosphate</text>
        <dbReference type="Rhea" id="RHEA:19989"/>
        <dbReference type="ChEBI" id="CHEBI:58533"/>
        <dbReference type="ChEBI" id="CHEBI:58548"/>
        <dbReference type="EC" id="5.3.1.23"/>
    </reaction>
</comment>
<comment type="pathway">
    <text evidence="1">Amino-acid biosynthesis; L-methionine biosynthesis via salvage pathway; L-methionine from S-methyl-5-thio-alpha-D-ribose 1-phosphate: step 1/6.</text>
</comment>
<comment type="subcellular location">
    <subcellularLocation>
        <location evidence="1">Cytoplasm</location>
    </subcellularLocation>
    <subcellularLocation>
        <location evidence="1">Nucleus</location>
    </subcellularLocation>
</comment>
<comment type="similarity">
    <text evidence="1">Belongs to the eIF-2B alpha/beta/delta subunits family. MtnA subfamily.</text>
</comment>
<proteinExistence type="inferred from homology"/>
<dbReference type="EC" id="5.3.1.23" evidence="1"/>
<dbReference type="EMBL" id="DS231616">
    <property type="protein sequence ID" value="EDU45421.1"/>
    <property type="molecule type" value="Genomic_DNA"/>
</dbReference>
<dbReference type="RefSeq" id="XP_001933231.1">
    <property type="nucleotide sequence ID" value="XM_001933196.1"/>
</dbReference>
<dbReference type="SMR" id="B2VZQ8"/>
<dbReference type="FunCoup" id="B2VZQ8">
    <property type="interactions" value="709"/>
</dbReference>
<dbReference type="STRING" id="426418.B2VZQ8"/>
<dbReference type="EnsemblFungi" id="EDU45421">
    <property type="protein sequence ID" value="EDU45421"/>
    <property type="gene ID" value="PTRG_02898"/>
</dbReference>
<dbReference type="GeneID" id="6341122"/>
<dbReference type="KEGG" id="ptrr:6341122"/>
<dbReference type="eggNOG" id="KOG1468">
    <property type="taxonomic scope" value="Eukaryota"/>
</dbReference>
<dbReference type="HOGENOM" id="CLU_016218_1_3_1"/>
<dbReference type="InParanoid" id="B2VZQ8"/>
<dbReference type="OMA" id="CETRPLN"/>
<dbReference type="OrthoDB" id="21115at28556"/>
<dbReference type="UniPathway" id="UPA00904">
    <property type="reaction ID" value="UER00874"/>
</dbReference>
<dbReference type="Proteomes" id="UP000001471">
    <property type="component" value="Unassembled WGS sequence"/>
</dbReference>
<dbReference type="GO" id="GO:0005737">
    <property type="term" value="C:cytoplasm"/>
    <property type="evidence" value="ECO:0007669"/>
    <property type="project" value="UniProtKB-SubCell"/>
</dbReference>
<dbReference type="GO" id="GO:0005634">
    <property type="term" value="C:nucleus"/>
    <property type="evidence" value="ECO:0007669"/>
    <property type="project" value="UniProtKB-SubCell"/>
</dbReference>
<dbReference type="GO" id="GO:0046523">
    <property type="term" value="F:S-methyl-5-thioribose-1-phosphate isomerase activity"/>
    <property type="evidence" value="ECO:0007669"/>
    <property type="project" value="UniProtKB-UniRule"/>
</dbReference>
<dbReference type="GO" id="GO:0019509">
    <property type="term" value="P:L-methionine salvage from methylthioadenosine"/>
    <property type="evidence" value="ECO:0007669"/>
    <property type="project" value="UniProtKB-UniRule"/>
</dbReference>
<dbReference type="FunFam" id="1.20.120.420:FF:000003">
    <property type="entry name" value="Methylthioribose-1-phosphate isomerase"/>
    <property type="match status" value="1"/>
</dbReference>
<dbReference type="FunFam" id="3.40.50.10470:FF:000010">
    <property type="entry name" value="Methylthioribose-1-phosphate isomerase"/>
    <property type="match status" value="1"/>
</dbReference>
<dbReference type="Gene3D" id="1.20.120.420">
    <property type="entry name" value="translation initiation factor eif-2b, domain 1"/>
    <property type="match status" value="1"/>
</dbReference>
<dbReference type="Gene3D" id="3.40.50.10470">
    <property type="entry name" value="Translation initiation factor eif-2b, domain 2"/>
    <property type="match status" value="1"/>
</dbReference>
<dbReference type="HAMAP" id="MF_01678">
    <property type="entry name" value="Salvage_MtnA"/>
    <property type="match status" value="1"/>
</dbReference>
<dbReference type="InterPro" id="IPR000649">
    <property type="entry name" value="IF-2B-related"/>
</dbReference>
<dbReference type="InterPro" id="IPR005251">
    <property type="entry name" value="IF-M1Pi"/>
</dbReference>
<dbReference type="InterPro" id="IPR042529">
    <property type="entry name" value="IF_2B-like_C"/>
</dbReference>
<dbReference type="InterPro" id="IPR011559">
    <property type="entry name" value="Initiation_fac_2B_a/b/d"/>
</dbReference>
<dbReference type="InterPro" id="IPR027363">
    <property type="entry name" value="M1Pi_N"/>
</dbReference>
<dbReference type="InterPro" id="IPR037171">
    <property type="entry name" value="NagB/RpiA_transferase-like"/>
</dbReference>
<dbReference type="NCBIfam" id="TIGR00524">
    <property type="entry name" value="eIF-2B_rel"/>
    <property type="match status" value="1"/>
</dbReference>
<dbReference type="NCBIfam" id="NF004326">
    <property type="entry name" value="PRK05720.1"/>
    <property type="match status" value="1"/>
</dbReference>
<dbReference type="NCBIfam" id="TIGR00512">
    <property type="entry name" value="salvage_mtnA"/>
    <property type="match status" value="1"/>
</dbReference>
<dbReference type="PANTHER" id="PTHR43475">
    <property type="entry name" value="METHYLTHIORIBOSE-1-PHOSPHATE ISOMERASE"/>
    <property type="match status" value="1"/>
</dbReference>
<dbReference type="PANTHER" id="PTHR43475:SF1">
    <property type="entry name" value="METHYLTHIORIBOSE-1-PHOSPHATE ISOMERASE"/>
    <property type="match status" value="1"/>
</dbReference>
<dbReference type="Pfam" id="PF01008">
    <property type="entry name" value="IF-2B"/>
    <property type="match status" value="1"/>
</dbReference>
<dbReference type="SUPFAM" id="SSF100950">
    <property type="entry name" value="NagB/RpiA/CoA transferase-like"/>
    <property type="match status" value="1"/>
</dbReference>
<gene>
    <name type="primary">mri1</name>
    <name type="ORF">PTRG_02898</name>
</gene>
<sequence>MVLQAIKYSRGQLEILDQLKLPHAEEYDHIYSSTDAWHAIKEMRTRGAPAIAIVAALALAVELSNMKLPSVAEEVKVFITEKLDYLVTSRPTAVNLADAAGKLQRITESAAASEGADGDSVREAYVSAAEKMLVDDVSDNESIGKHGAEWIMKNTEAGKKGPVSMMTHCNTGSLATAGYGTALGVIRSLHSAGSLKHAFCSETRPYNQGSRLTAFELVHDKIPATLITDSMAAALLRLRGESENIAGIVVGADRVAANGDTANKIGTYSLAILAKHHGVKFLVAAPRTTIDLKTKSGADIVIEERSGKEVTLVKGPRHDGVTLDLGVIETISIAANGIGVWNPAFDVTPAELIDGIITEVGVVEKDSNGVFHLDTVFKAEGSEVKPSTIGGL</sequence>
<feature type="chain" id="PRO_0000402046" description="Methylthioribose-1-phosphate isomerase">
    <location>
        <begin position="1"/>
        <end position="392"/>
    </location>
</feature>
<feature type="active site" description="Proton donor" evidence="1">
    <location>
        <position position="253"/>
    </location>
</feature>
<feature type="site" description="Transition state stabilizer" evidence="1">
    <location>
        <position position="169"/>
    </location>
</feature>
<name>MTNA_PYRTR</name>
<keyword id="KW-0028">Amino-acid biosynthesis</keyword>
<keyword id="KW-0963">Cytoplasm</keyword>
<keyword id="KW-0413">Isomerase</keyword>
<keyword id="KW-0486">Methionine biosynthesis</keyword>
<keyword id="KW-0539">Nucleus</keyword>
<keyword id="KW-1185">Reference proteome</keyword>